<proteinExistence type="inferred from homology"/>
<comment type="function">
    <text evidence="1">Probably functions as a manganese efflux pump.</text>
</comment>
<comment type="subcellular location">
    <subcellularLocation>
        <location evidence="1">Cell inner membrane</location>
        <topology evidence="1">Multi-pass membrane protein</topology>
    </subcellularLocation>
</comment>
<comment type="similarity">
    <text evidence="1">Belongs to the MntP (TC 9.B.29) family.</text>
</comment>
<keyword id="KW-0997">Cell inner membrane</keyword>
<keyword id="KW-1003">Cell membrane</keyword>
<keyword id="KW-0406">Ion transport</keyword>
<keyword id="KW-0464">Manganese</keyword>
<keyword id="KW-0472">Membrane</keyword>
<keyword id="KW-0812">Transmembrane</keyword>
<keyword id="KW-1133">Transmembrane helix</keyword>
<keyword id="KW-0813">Transport</keyword>
<protein>
    <recommendedName>
        <fullName evidence="1">Putative manganese efflux pump MntP</fullName>
    </recommendedName>
</protein>
<reference key="1">
    <citation type="journal article" date="2006" name="J. Bacteriol.">
        <title>Complete genome sequence of Yersinia pestis strains Antiqua and Nepal516: evidence of gene reduction in an emerging pathogen.</title>
        <authorList>
            <person name="Chain P.S.G."/>
            <person name="Hu P."/>
            <person name="Malfatti S.A."/>
            <person name="Radnedge L."/>
            <person name="Larimer F."/>
            <person name="Vergez L.M."/>
            <person name="Worsham P."/>
            <person name="Chu M.C."/>
            <person name="Andersen G.L."/>
        </authorList>
    </citation>
    <scope>NUCLEOTIDE SEQUENCE [LARGE SCALE GENOMIC DNA]</scope>
    <source>
        <strain>Antiqua</strain>
    </source>
</reference>
<evidence type="ECO:0000255" key="1">
    <source>
        <dbReference type="HAMAP-Rule" id="MF_01521"/>
    </source>
</evidence>
<dbReference type="EMBL" id="CP000308">
    <property type="protein sequence ID" value="ABG13093.1"/>
    <property type="molecule type" value="Genomic_DNA"/>
</dbReference>
<dbReference type="RefSeq" id="WP_002211065.1">
    <property type="nucleotide sequence ID" value="NZ_CP009906.1"/>
</dbReference>
<dbReference type="GeneID" id="57976826"/>
<dbReference type="KEGG" id="ypa:YPA_1126"/>
<dbReference type="Proteomes" id="UP000001971">
    <property type="component" value="Chromosome"/>
</dbReference>
<dbReference type="GO" id="GO:0005886">
    <property type="term" value="C:plasma membrane"/>
    <property type="evidence" value="ECO:0007669"/>
    <property type="project" value="UniProtKB-SubCell"/>
</dbReference>
<dbReference type="GO" id="GO:0005384">
    <property type="term" value="F:manganese ion transmembrane transporter activity"/>
    <property type="evidence" value="ECO:0007669"/>
    <property type="project" value="UniProtKB-UniRule"/>
</dbReference>
<dbReference type="HAMAP" id="MF_01521">
    <property type="entry name" value="MntP_pump"/>
    <property type="match status" value="1"/>
</dbReference>
<dbReference type="InterPro" id="IPR003810">
    <property type="entry name" value="Mntp/YtaF"/>
</dbReference>
<dbReference type="InterPro" id="IPR022929">
    <property type="entry name" value="Put_MntP"/>
</dbReference>
<dbReference type="NCBIfam" id="NF008546">
    <property type="entry name" value="PRK11469.1"/>
    <property type="match status" value="1"/>
</dbReference>
<dbReference type="PANTHER" id="PTHR35529">
    <property type="entry name" value="MANGANESE EFFLUX PUMP MNTP-RELATED"/>
    <property type="match status" value="1"/>
</dbReference>
<dbReference type="PANTHER" id="PTHR35529:SF1">
    <property type="entry name" value="MANGANESE EFFLUX PUMP MNTP-RELATED"/>
    <property type="match status" value="1"/>
</dbReference>
<dbReference type="Pfam" id="PF02659">
    <property type="entry name" value="Mntp"/>
    <property type="match status" value="1"/>
</dbReference>
<accession>Q1C8X9</accession>
<organism>
    <name type="scientific">Yersinia pestis bv. Antiqua (strain Antiqua)</name>
    <dbReference type="NCBI Taxonomy" id="360102"/>
    <lineage>
        <taxon>Bacteria</taxon>
        <taxon>Pseudomonadati</taxon>
        <taxon>Pseudomonadota</taxon>
        <taxon>Gammaproteobacteria</taxon>
        <taxon>Enterobacterales</taxon>
        <taxon>Yersiniaceae</taxon>
        <taxon>Yersinia</taxon>
    </lineage>
</organism>
<sequence length="189" mass="20660">MNLSATIILAFAMSMDAFAASIGKGATLYKPRFREALRTGLIFGVIEAITPLIGWCIGLFASQYIMEWDHWIAFSLLFILGCRMIFEGMKQRVAETEKMRSHSFWVLVTTAIATSLDAMAIGVGLAFLQVDIVHTAMAIGLATMIMATLGMLIGRYIGPLLGKRAEIIGGIVLIGIGFNILYEHMHLTA</sequence>
<name>MNTP_YERPA</name>
<gene>
    <name evidence="1" type="primary">mntP</name>
    <name type="ordered locus">YPA_1126</name>
</gene>
<feature type="chain" id="PRO_0000296944" description="Putative manganese efflux pump MntP">
    <location>
        <begin position="1"/>
        <end position="189"/>
    </location>
</feature>
<feature type="transmembrane region" description="Helical" evidence="1">
    <location>
        <begin position="3"/>
        <end position="23"/>
    </location>
</feature>
<feature type="transmembrane region" description="Helical" evidence="1">
    <location>
        <begin position="41"/>
        <end position="61"/>
    </location>
</feature>
<feature type="transmembrane region" description="Helical" evidence="1">
    <location>
        <begin position="65"/>
        <end position="85"/>
    </location>
</feature>
<feature type="transmembrane region" description="Helical" evidence="1">
    <location>
        <begin position="104"/>
        <end position="124"/>
    </location>
</feature>
<feature type="transmembrane region" description="Helical" evidence="1">
    <location>
        <begin position="132"/>
        <end position="152"/>
    </location>
</feature>
<feature type="transmembrane region" description="Helical" evidence="1">
    <location>
        <begin position="167"/>
        <end position="187"/>
    </location>
</feature>